<dbReference type="EMBL" id="AC002391">
    <property type="status" value="NOT_ANNOTATED_CDS"/>
    <property type="molecule type" value="Genomic_DNA"/>
</dbReference>
<dbReference type="EMBL" id="AC004401">
    <property type="status" value="NOT_ANNOTATED_CDS"/>
    <property type="molecule type" value="Genomic_DNA"/>
</dbReference>
<dbReference type="EMBL" id="CP002685">
    <property type="protein sequence ID" value="AEC07419.1"/>
    <property type="molecule type" value="Genomic_DNA"/>
</dbReference>
<dbReference type="RefSeq" id="NP_001118368.1">
    <property type="nucleotide sequence ID" value="NM_001124896.1"/>
</dbReference>
<dbReference type="SMR" id="B3H6H8"/>
<dbReference type="STRING" id="3702.B3H6H8"/>
<dbReference type="PaxDb" id="3702-AT2G23142.1"/>
<dbReference type="ProteomicsDB" id="232527"/>
<dbReference type="EnsemblPlants" id="AT2G23142.1">
    <property type="protein sequence ID" value="AT2G23142.1"/>
    <property type="gene ID" value="AT2G23142"/>
</dbReference>
<dbReference type="GeneID" id="6240696"/>
<dbReference type="Gramene" id="AT2G23142.1">
    <property type="protein sequence ID" value="AT2G23142.1"/>
    <property type="gene ID" value="AT2G23142"/>
</dbReference>
<dbReference type="KEGG" id="ath:AT2G23142"/>
<dbReference type="Araport" id="AT2G23142"/>
<dbReference type="TAIR" id="AT2G23142"/>
<dbReference type="HOGENOM" id="CLU_125658_3_0_1"/>
<dbReference type="InParanoid" id="B3H6H8"/>
<dbReference type="OMA" id="PSMRVES"/>
<dbReference type="PhylomeDB" id="B3H6H8"/>
<dbReference type="PRO" id="PR:B3H6H8"/>
<dbReference type="Proteomes" id="UP000006548">
    <property type="component" value="Chromosome 2"/>
</dbReference>
<dbReference type="ExpressionAtlas" id="B3H6H8">
    <property type="expression patterns" value="baseline"/>
</dbReference>
<dbReference type="GO" id="GO:0005576">
    <property type="term" value="C:extracellular region"/>
    <property type="evidence" value="ECO:0007669"/>
    <property type="project" value="UniProtKB-SubCell"/>
</dbReference>
<dbReference type="GO" id="GO:0060320">
    <property type="term" value="P:rejection of self pollen"/>
    <property type="evidence" value="ECO:0007669"/>
    <property type="project" value="UniProtKB-KW"/>
</dbReference>
<dbReference type="InterPro" id="IPR010264">
    <property type="entry name" value="Self-incomp_S1"/>
</dbReference>
<dbReference type="PANTHER" id="PTHR31232">
    <property type="match status" value="1"/>
</dbReference>
<dbReference type="PANTHER" id="PTHR31232:SF39">
    <property type="entry name" value="S-PROTEIN HOMOLOG-RELATED"/>
    <property type="match status" value="1"/>
</dbReference>
<dbReference type="Pfam" id="PF05938">
    <property type="entry name" value="Self-incomp_S1"/>
    <property type="match status" value="1"/>
</dbReference>
<comment type="subcellular location">
    <subcellularLocation>
        <location evidence="4">Secreted</location>
    </subcellularLocation>
</comment>
<comment type="similarity">
    <text evidence="3">Belongs to the plant self-incompatibility (S1) protein family.</text>
</comment>
<name>SPH10_ARATH</name>
<sequence length="147" mass="17172">MNCFSYFFLVIILCAGLNNAKFNEKNSVIFKSSLGPKKLLRIHCTSEHDDTDYVYLRHGQTYAFSFHDSVLKTIFDCELKQGSSYYNYNFYARFRAYKGGGLIVHYGKKNFWDAREDGIYFTHGKETPKLEYKWIPGDPSMRVESPL</sequence>
<evidence type="ECO:0000255" key="1"/>
<evidence type="ECO:0000303" key="2">
    <source>
    </source>
</evidence>
<evidence type="ECO:0000305" key="3"/>
<evidence type="ECO:0000305" key="4">
    <source>
    </source>
</evidence>
<evidence type="ECO:0000312" key="5">
    <source>
        <dbReference type="Araport" id="AT2G23142"/>
    </source>
</evidence>
<reference key="1">
    <citation type="journal article" date="1999" name="Nature">
        <title>Sequence and analysis of chromosome 2 of the plant Arabidopsis thaliana.</title>
        <authorList>
            <person name="Lin X."/>
            <person name="Kaul S."/>
            <person name="Rounsley S.D."/>
            <person name="Shea T.P."/>
            <person name="Benito M.-I."/>
            <person name="Town C.D."/>
            <person name="Fujii C.Y."/>
            <person name="Mason T.M."/>
            <person name="Bowman C.L."/>
            <person name="Barnstead M.E."/>
            <person name="Feldblyum T.V."/>
            <person name="Buell C.R."/>
            <person name="Ketchum K.A."/>
            <person name="Lee J.J."/>
            <person name="Ronning C.M."/>
            <person name="Koo H.L."/>
            <person name="Moffat K.S."/>
            <person name="Cronin L.A."/>
            <person name="Shen M."/>
            <person name="Pai G."/>
            <person name="Van Aken S."/>
            <person name="Umayam L."/>
            <person name="Tallon L.J."/>
            <person name="Gill J.E."/>
            <person name="Adams M.D."/>
            <person name="Carrera A.J."/>
            <person name="Creasy T.H."/>
            <person name="Goodman H.M."/>
            <person name="Somerville C.R."/>
            <person name="Copenhaver G.P."/>
            <person name="Preuss D."/>
            <person name="Nierman W.C."/>
            <person name="White O."/>
            <person name="Eisen J.A."/>
            <person name="Salzberg S.L."/>
            <person name="Fraser C.M."/>
            <person name="Venter J.C."/>
        </authorList>
    </citation>
    <scope>NUCLEOTIDE SEQUENCE [LARGE SCALE GENOMIC DNA]</scope>
    <source>
        <strain>cv. Columbia</strain>
    </source>
</reference>
<reference key="2">
    <citation type="journal article" date="2017" name="Plant J.">
        <title>Araport11: a complete reannotation of the Arabidopsis thaliana reference genome.</title>
        <authorList>
            <person name="Cheng C.Y."/>
            <person name="Krishnakumar V."/>
            <person name="Chan A.P."/>
            <person name="Thibaud-Nissen F."/>
            <person name="Schobel S."/>
            <person name="Town C.D."/>
        </authorList>
    </citation>
    <scope>GENOME REANNOTATION</scope>
    <source>
        <strain>cv. Columbia</strain>
    </source>
</reference>
<reference key="3">
    <citation type="journal article" date="1999" name="Plant Mol. Biol.">
        <title>Analysis of Arabidopsis genome sequence reveals a large new gene family in plants.</title>
        <authorList>
            <person name="Ride J.P."/>
            <person name="Davies E.M."/>
            <person name="Franklin F.C.H."/>
            <person name="Marshall D.F."/>
        </authorList>
    </citation>
    <scope>GENE FAMILY</scope>
    <scope>NOMENCLATURE</scope>
    <source>
        <strain>cv. Columbia</strain>
    </source>
</reference>
<feature type="signal peptide" evidence="1">
    <location>
        <begin position="1"/>
        <end position="20"/>
    </location>
</feature>
<feature type="chain" id="PRO_5002789348" description="S-protein homolog 10">
    <location>
        <begin position="21"/>
        <end position="147"/>
    </location>
</feature>
<protein>
    <recommendedName>
        <fullName evidence="2">S-protein homolog 10</fullName>
    </recommendedName>
</protein>
<proteinExistence type="inferred from homology"/>
<gene>
    <name evidence="2" type="primary">SPH10</name>
    <name evidence="5" type="ordered locus">At2g23142</name>
    <name evidence="3" type="ORF">F21P24</name>
    <name evidence="3" type="ORF">T20D16</name>
</gene>
<organism>
    <name type="scientific">Arabidopsis thaliana</name>
    <name type="common">Mouse-ear cress</name>
    <dbReference type="NCBI Taxonomy" id="3702"/>
    <lineage>
        <taxon>Eukaryota</taxon>
        <taxon>Viridiplantae</taxon>
        <taxon>Streptophyta</taxon>
        <taxon>Embryophyta</taxon>
        <taxon>Tracheophyta</taxon>
        <taxon>Spermatophyta</taxon>
        <taxon>Magnoliopsida</taxon>
        <taxon>eudicotyledons</taxon>
        <taxon>Gunneridae</taxon>
        <taxon>Pentapetalae</taxon>
        <taxon>rosids</taxon>
        <taxon>malvids</taxon>
        <taxon>Brassicales</taxon>
        <taxon>Brassicaceae</taxon>
        <taxon>Camelineae</taxon>
        <taxon>Arabidopsis</taxon>
    </lineage>
</organism>
<accession>B3H6H8</accession>
<keyword id="KW-1185">Reference proteome</keyword>
<keyword id="KW-0964">Secreted</keyword>
<keyword id="KW-0713">Self-incompatibility</keyword>
<keyword id="KW-0732">Signal</keyword>